<dbReference type="EMBL" id="AM263198">
    <property type="protein sequence ID" value="CAK20248.1"/>
    <property type="molecule type" value="Genomic_DNA"/>
</dbReference>
<dbReference type="RefSeq" id="WP_003721401.1">
    <property type="nucleotide sequence ID" value="NC_008555.1"/>
</dbReference>
<dbReference type="SMR" id="A0AGW6"/>
<dbReference type="STRING" id="386043.lwe0830"/>
<dbReference type="GeneID" id="61188719"/>
<dbReference type="KEGG" id="lwe:lwe0830"/>
<dbReference type="eggNOG" id="COG3223">
    <property type="taxonomic scope" value="Bacteria"/>
</dbReference>
<dbReference type="HOGENOM" id="CLU_127561_0_0_9"/>
<dbReference type="OrthoDB" id="9792470at2"/>
<dbReference type="Proteomes" id="UP000000779">
    <property type="component" value="Chromosome"/>
</dbReference>
<dbReference type="GO" id="GO:0005886">
    <property type="term" value="C:plasma membrane"/>
    <property type="evidence" value="ECO:0007669"/>
    <property type="project" value="UniProtKB-SubCell"/>
</dbReference>
<dbReference type="GO" id="GO:0016036">
    <property type="term" value="P:cellular response to phosphate starvation"/>
    <property type="evidence" value="ECO:0007669"/>
    <property type="project" value="InterPro"/>
</dbReference>
<dbReference type="HAMAP" id="MF_01048">
    <property type="entry name" value="PsiE"/>
    <property type="match status" value="1"/>
</dbReference>
<dbReference type="InterPro" id="IPR009315">
    <property type="entry name" value="P_starv_induced_PsiE"/>
</dbReference>
<dbReference type="InterPro" id="IPR020948">
    <property type="entry name" value="P_starv_induced_PsiE-like"/>
</dbReference>
<dbReference type="NCBIfam" id="NF002765">
    <property type="entry name" value="PRK02833.1-3"/>
    <property type="match status" value="1"/>
</dbReference>
<dbReference type="NCBIfam" id="NF002766">
    <property type="entry name" value="PRK02833.1-4"/>
    <property type="match status" value="1"/>
</dbReference>
<dbReference type="PANTHER" id="PTHR37819">
    <property type="entry name" value="PROTEIN PSIE"/>
    <property type="match status" value="1"/>
</dbReference>
<dbReference type="PANTHER" id="PTHR37819:SF1">
    <property type="entry name" value="PROTEIN PSIE"/>
    <property type="match status" value="1"/>
</dbReference>
<dbReference type="Pfam" id="PF06146">
    <property type="entry name" value="PsiE"/>
    <property type="match status" value="1"/>
</dbReference>
<dbReference type="PIRSF" id="PIRSF029598">
    <property type="entry name" value="PsiE"/>
    <property type="match status" value="1"/>
</dbReference>
<protein>
    <recommendedName>
        <fullName evidence="1">Protein PsiE homolog</fullName>
    </recommendedName>
</protein>
<reference key="1">
    <citation type="journal article" date="2006" name="J. Bacteriol.">
        <title>Whole-genome sequence of Listeria welshimeri reveals common steps in genome reduction with Listeria innocua as compared to Listeria monocytogenes.</title>
        <authorList>
            <person name="Hain T."/>
            <person name="Steinweg C."/>
            <person name="Kuenne C.T."/>
            <person name="Billion A."/>
            <person name="Ghai R."/>
            <person name="Chatterjee S.S."/>
            <person name="Domann E."/>
            <person name="Kaerst U."/>
            <person name="Goesmann A."/>
            <person name="Bekel T."/>
            <person name="Bartels D."/>
            <person name="Kaiser O."/>
            <person name="Meyer F."/>
            <person name="Puehler A."/>
            <person name="Weisshaar B."/>
            <person name="Wehland J."/>
            <person name="Liang C."/>
            <person name="Dandekar T."/>
            <person name="Lampidis R."/>
            <person name="Kreft J."/>
            <person name="Goebel W."/>
            <person name="Chakraborty T."/>
        </authorList>
    </citation>
    <scope>NUCLEOTIDE SEQUENCE [LARGE SCALE GENOMIC DNA]</scope>
    <source>
        <strain>ATCC 35897 / DSM 20650 / CCUG 15529 / CIP 8149 / NCTC 11857 / SLCC 5334 / V8</strain>
    </source>
</reference>
<gene>
    <name evidence="1" type="primary">psiE</name>
    <name type="ordered locus">lwe0830</name>
</gene>
<organism>
    <name type="scientific">Listeria welshimeri serovar 6b (strain ATCC 35897 / DSM 20650 / CCUG 15529 / CIP 8149 / NCTC 11857 / SLCC 5334 / V8)</name>
    <dbReference type="NCBI Taxonomy" id="386043"/>
    <lineage>
        <taxon>Bacteria</taxon>
        <taxon>Bacillati</taxon>
        <taxon>Bacillota</taxon>
        <taxon>Bacilli</taxon>
        <taxon>Bacillales</taxon>
        <taxon>Listeriaceae</taxon>
        <taxon>Listeria</taxon>
    </lineage>
</organism>
<sequence>MKRLEKISSIVPILLRITLNLALIMVGFTLVAFLIREAFTIFNNIFFLDTDVSYYYMTQDILTFFLYFEFIALIVKYFESHFHFPLRYFIYIGITAIIRFIIVDHSSATSTLILSGAILLLVAALFLANTKMLKREG</sequence>
<evidence type="ECO:0000255" key="1">
    <source>
        <dbReference type="HAMAP-Rule" id="MF_01048"/>
    </source>
</evidence>
<accession>A0AGW6</accession>
<name>PSIE_LISW6</name>
<keyword id="KW-1003">Cell membrane</keyword>
<keyword id="KW-0472">Membrane</keyword>
<keyword id="KW-0812">Transmembrane</keyword>
<keyword id="KW-1133">Transmembrane helix</keyword>
<proteinExistence type="inferred from homology"/>
<comment type="subcellular location">
    <subcellularLocation>
        <location evidence="1">Cell membrane</location>
        <topology evidence="1">Multi-pass membrane protein</topology>
    </subcellularLocation>
</comment>
<comment type="similarity">
    <text evidence="1">Belongs to the PsiE family.</text>
</comment>
<feature type="chain" id="PRO_1000064317" description="Protein PsiE homolog">
    <location>
        <begin position="1"/>
        <end position="137"/>
    </location>
</feature>
<feature type="transmembrane region" description="Helical" evidence="1">
    <location>
        <begin position="13"/>
        <end position="33"/>
    </location>
</feature>
<feature type="transmembrane region" description="Helical" evidence="1">
    <location>
        <begin position="55"/>
        <end position="75"/>
    </location>
</feature>
<feature type="transmembrane region" description="Helical" evidence="1">
    <location>
        <begin position="82"/>
        <end position="102"/>
    </location>
</feature>
<feature type="transmembrane region" description="Helical" evidence="1">
    <location>
        <begin position="108"/>
        <end position="128"/>
    </location>
</feature>